<proteinExistence type="evidence at protein level"/>
<accession>A0A6F8RNP4</accession>
<feature type="chain" id="PRO_0000457343" description="Reducing polyketide synthase grgA">
    <location>
        <begin position="1"/>
        <end position="2473"/>
    </location>
</feature>
<feature type="domain" description="Ketosynthase family 3 (KS3)" evidence="3">
    <location>
        <begin position="15"/>
        <end position="446"/>
    </location>
</feature>
<feature type="domain" description="Malonyl-CoA:ACP transacylase (MAT)" evidence="1">
    <location>
        <begin position="559"/>
        <end position="882"/>
    </location>
</feature>
<feature type="domain" description="PKS/mFAS DH" evidence="4">
    <location>
        <begin position="956"/>
        <end position="1262"/>
    </location>
</feature>
<feature type="domain" description="Ketoreductase (KR)" evidence="1">
    <location>
        <begin position="2108"/>
        <end position="2281"/>
    </location>
</feature>
<feature type="domain" description="Carrier" evidence="2">
    <location>
        <begin position="2388"/>
        <end position="2473"/>
    </location>
</feature>
<feature type="region of interest" description="Dehydratase (DH) domain" evidence="1">
    <location>
        <begin position="956"/>
        <end position="1260"/>
    </location>
</feature>
<feature type="region of interest" description="N-terminal hotdog fold" evidence="4">
    <location>
        <begin position="956"/>
        <end position="1099"/>
    </location>
</feature>
<feature type="region of interest" description="C-terminal hotdog fold" evidence="4">
    <location>
        <begin position="1114"/>
        <end position="1262"/>
    </location>
</feature>
<feature type="region of interest" description="Methyltransfrase (MT) domain" evidence="1">
    <location>
        <begin position="1300"/>
        <end position="1606"/>
    </location>
</feature>
<feature type="active site" description="For beta-ketoacyl synthase activity" evidence="3">
    <location>
        <position position="188"/>
    </location>
</feature>
<feature type="active site" description="For beta-ketoacyl synthase activity" evidence="3">
    <location>
        <position position="327"/>
    </location>
</feature>
<feature type="active site" description="For beta-ketoacyl synthase activity" evidence="3">
    <location>
        <position position="366"/>
    </location>
</feature>
<feature type="active site" description="Proton acceptor; for dehydratase activity" evidence="4">
    <location>
        <position position="990"/>
    </location>
</feature>
<feature type="active site" description="Proton donor; for dehydratase activity" evidence="4">
    <location>
        <position position="1172"/>
    </location>
</feature>
<feature type="modified residue" description="O-(pantetheine 4'-phosphoryl)serine" evidence="2">
    <location>
        <position position="2426"/>
    </location>
</feature>
<dbReference type="EC" id="2.3.1.-" evidence="5"/>
<dbReference type="EMBL" id="LC522971">
    <property type="protein sequence ID" value="BCA42568.1"/>
    <property type="molecule type" value="Genomic_DNA"/>
</dbReference>
<dbReference type="SMR" id="A0A6F8RNP4"/>
<dbReference type="GO" id="GO:0004315">
    <property type="term" value="F:3-oxoacyl-[acyl-carrier-protein] synthase activity"/>
    <property type="evidence" value="ECO:0007669"/>
    <property type="project" value="InterPro"/>
</dbReference>
<dbReference type="GO" id="GO:0004312">
    <property type="term" value="F:fatty acid synthase activity"/>
    <property type="evidence" value="ECO:0007669"/>
    <property type="project" value="TreeGrafter"/>
</dbReference>
<dbReference type="GO" id="GO:0008168">
    <property type="term" value="F:methyltransferase activity"/>
    <property type="evidence" value="ECO:0007669"/>
    <property type="project" value="UniProtKB-KW"/>
</dbReference>
<dbReference type="GO" id="GO:0016491">
    <property type="term" value="F:oxidoreductase activity"/>
    <property type="evidence" value="ECO:0007669"/>
    <property type="project" value="UniProtKB-KW"/>
</dbReference>
<dbReference type="GO" id="GO:0031177">
    <property type="term" value="F:phosphopantetheine binding"/>
    <property type="evidence" value="ECO:0007669"/>
    <property type="project" value="InterPro"/>
</dbReference>
<dbReference type="GO" id="GO:0006633">
    <property type="term" value="P:fatty acid biosynthetic process"/>
    <property type="evidence" value="ECO:0007669"/>
    <property type="project" value="InterPro"/>
</dbReference>
<dbReference type="GO" id="GO:1901336">
    <property type="term" value="P:lactone biosynthetic process"/>
    <property type="evidence" value="ECO:0007669"/>
    <property type="project" value="UniProtKB-ARBA"/>
</dbReference>
<dbReference type="GO" id="GO:0032259">
    <property type="term" value="P:methylation"/>
    <property type="evidence" value="ECO:0007669"/>
    <property type="project" value="UniProtKB-KW"/>
</dbReference>
<dbReference type="GO" id="GO:0030639">
    <property type="term" value="P:polyketide biosynthetic process"/>
    <property type="evidence" value="ECO:0007669"/>
    <property type="project" value="UniProtKB-ARBA"/>
</dbReference>
<dbReference type="CDD" id="cd02440">
    <property type="entry name" value="AdoMet_MTases"/>
    <property type="match status" value="1"/>
</dbReference>
<dbReference type="CDD" id="cd00833">
    <property type="entry name" value="PKS"/>
    <property type="match status" value="1"/>
</dbReference>
<dbReference type="FunFam" id="3.40.47.10:FF:000019">
    <property type="entry name" value="Polyketide synthase type I"/>
    <property type="match status" value="1"/>
</dbReference>
<dbReference type="Gene3D" id="3.30.70.3290">
    <property type="match status" value="1"/>
</dbReference>
<dbReference type="Gene3D" id="3.40.47.10">
    <property type="match status" value="1"/>
</dbReference>
<dbReference type="Gene3D" id="1.10.1200.10">
    <property type="entry name" value="ACP-like"/>
    <property type="match status" value="1"/>
</dbReference>
<dbReference type="Gene3D" id="3.40.366.10">
    <property type="entry name" value="Malonyl-Coenzyme A Acyl Carrier Protein, domain 2"/>
    <property type="match status" value="1"/>
</dbReference>
<dbReference type="Gene3D" id="3.40.50.720">
    <property type="entry name" value="NAD(P)-binding Rossmann-like Domain"/>
    <property type="match status" value="2"/>
</dbReference>
<dbReference type="Gene3D" id="3.10.129.110">
    <property type="entry name" value="Polyketide synthase dehydratase"/>
    <property type="match status" value="1"/>
</dbReference>
<dbReference type="Gene3D" id="3.40.50.150">
    <property type="entry name" value="Vaccinia Virus protein VP39"/>
    <property type="match status" value="1"/>
</dbReference>
<dbReference type="InterPro" id="IPR001227">
    <property type="entry name" value="Ac_transferase_dom_sf"/>
</dbReference>
<dbReference type="InterPro" id="IPR036736">
    <property type="entry name" value="ACP-like_sf"/>
</dbReference>
<dbReference type="InterPro" id="IPR014043">
    <property type="entry name" value="Acyl_transferase_dom"/>
</dbReference>
<dbReference type="InterPro" id="IPR016035">
    <property type="entry name" value="Acyl_Trfase/lysoPLipase"/>
</dbReference>
<dbReference type="InterPro" id="IPR018201">
    <property type="entry name" value="Ketoacyl_synth_AS"/>
</dbReference>
<dbReference type="InterPro" id="IPR014031">
    <property type="entry name" value="Ketoacyl_synth_C"/>
</dbReference>
<dbReference type="InterPro" id="IPR014030">
    <property type="entry name" value="Ketoacyl_synth_N"/>
</dbReference>
<dbReference type="InterPro" id="IPR016036">
    <property type="entry name" value="Malonyl_transacylase_ACP-bd"/>
</dbReference>
<dbReference type="InterPro" id="IPR013217">
    <property type="entry name" value="Methyltransf_12"/>
</dbReference>
<dbReference type="InterPro" id="IPR036291">
    <property type="entry name" value="NAD(P)-bd_dom_sf"/>
</dbReference>
<dbReference type="InterPro" id="IPR056501">
    <property type="entry name" value="NAD-bd_HRPKS_sdrA"/>
</dbReference>
<dbReference type="InterPro" id="IPR032821">
    <property type="entry name" value="PKS_assoc"/>
</dbReference>
<dbReference type="InterPro" id="IPR020841">
    <property type="entry name" value="PKS_Beta-ketoAc_synthase_dom"/>
</dbReference>
<dbReference type="InterPro" id="IPR042104">
    <property type="entry name" value="PKS_dehydratase_sf"/>
</dbReference>
<dbReference type="InterPro" id="IPR020807">
    <property type="entry name" value="PKS_DH"/>
</dbReference>
<dbReference type="InterPro" id="IPR049551">
    <property type="entry name" value="PKS_DH_C"/>
</dbReference>
<dbReference type="InterPro" id="IPR049552">
    <property type="entry name" value="PKS_DH_N"/>
</dbReference>
<dbReference type="InterPro" id="IPR013968">
    <property type="entry name" value="PKS_KR"/>
</dbReference>
<dbReference type="InterPro" id="IPR049900">
    <property type="entry name" value="PKS_mFAS_DH"/>
</dbReference>
<dbReference type="InterPro" id="IPR050091">
    <property type="entry name" value="PKS_NRPS_Biosynth_Enz"/>
</dbReference>
<dbReference type="InterPro" id="IPR020806">
    <property type="entry name" value="PKS_PP-bd"/>
</dbReference>
<dbReference type="InterPro" id="IPR009081">
    <property type="entry name" value="PP-bd_ACP"/>
</dbReference>
<dbReference type="InterPro" id="IPR029063">
    <property type="entry name" value="SAM-dependent_MTases_sf"/>
</dbReference>
<dbReference type="InterPro" id="IPR016039">
    <property type="entry name" value="Thiolase-like"/>
</dbReference>
<dbReference type="PANTHER" id="PTHR43775">
    <property type="entry name" value="FATTY ACID SYNTHASE"/>
    <property type="match status" value="1"/>
</dbReference>
<dbReference type="PANTHER" id="PTHR43775:SF20">
    <property type="entry name" value="HYBRID PKS-NRPS SYNTHETASE APDA"/>
    <property type="match status" value="1"/>
</dbReference>
<dbReference type="Pfam" id="PF00698">
    <property type="entry name" value="Acyl_transf_1"/>
    <property type="match status" value="1"/>
</dbReference>
<dbReference type="Pfam" id="PF16197">
    <property type="entry name" value="KAsynt_C_assoc"/>
    <property type="match status" value="1"/>
</dbReference>
<dbReference type="Pfam" id="PF00109">
    <property type="entry name" value="ketoacyl-synt"/>
    <property type="match status" value="1"/>
</dbReference>
<dbReference type="Pfam" id="PF02801">
    <property type="entry name" value="Ketoacyl-synt_C"/>
    <property type="match status" value="1"/>
</dbReference>
<dbReference type="Pfam" id="PF08659">
    <property type="entry name" value="KR"/>
    <property type="match status" value="1"/>
</dbReference>
<dbReference type="Pfam" id="PF08242">
    <property type="entry name" value="Methyltransf_12"/>
    <property type="match status" value="1"/>
</dbReference>
<dbReference type="Pfam" id="PF23114">
    <property type="entry name" value="NAD-bd_HRPKS_sdrA"/>
    <property type="match status" value="1"/>
</dbReference>
<dbReference type="Pfam" id="PF21089">
    <property type="entry name" value="PKS_DH_N"/>
    <property type="match status" value="1"/>
</dbReference>
<dbReference type="Pfam" id="PF00550">
    <property type="entry name" value="PP-binding"/>
    <property type="match status" value="1"/>
</dbReference>
<dbReference type="Pfam" id="PF14765">
    <property type="entry name" value="PS-DH"/>
    <property type="match status" value="1"/>
</dbReference>
<dbReference type="SMART" id="SM00827">
    <property type="entry name" value="PKS_AT"/>
    <property type="match status" value="1"/>
</dbReference>
<dbReference type="SMART" id="SM00826">
    <property type="entry name" value="PKS_DH"/>
    <property type="match status" value="1"/>
</dbReference>
<dbReference type="SMART" id="SM00822">
    <property type="entry name" value="PKS_KR"/>
    <property type="match status" value="1"/>
</dbReference>
<dbReference type="SMART" id="SM00825">
    <property type="entry name" value="PKS_KS"/>
    <property type="match status" value="1"/>
</dbReference>
<dbReference type="SMART" id="SM00823">
    <property type="entry name" value="PKS_PP"/>
    <property type="match status" value="1"/>
</dbReference>
<dbReference type="SUPFAM" id="SSF47336">
    <property type="entry name" value="ACP-like"/>
    <property type="match status" value="1"/>
</dbReference>
<dbReference type="SUPFAM" id="SSF52151">
    <property type="entry name" value="FabD/lysophospholipase-like"/>
    <property type="match status" value="1"/>
</dbReference>
<dbReference type="SUPFAM" id="SSF51735">
    <property type="entry name" value="NAD(P)-binding Rossmann-fold domains"/>
    <property type="match status" value="1"/>
</dbReference>
<dbReference type="SUPFAM" id="SSF55048">
    <property type="entry name" value="Probable ACP-binding domain of malonyl-CoA ACP transacylase"/>
    <property type="match status" value="1"/>
</dbReference>
<dbReference type="SUPFAM" id="SSF53335">
    <property type="entry name" value="S-adenosyl-L-methionine-dependent methyltransferases"/>
    <property type="match status" value="1"/>
</dbReference>
<dbReference type="SUPFAM" id="SSF53901">
    <property type="entry name" value="Thiolase-like"/>
    <property type="match status" value="1"/>
</dbReference>
<dbReference type="PROSITE" id="PS00606">
    <property type="entry name" value="KS3_1"/>
    <property type="match status" value="1"/>
</dbReference>
<dbReference type="PROSITE" id="PS52004">
    <property type="entry name" value="KS3_2"/>
    <property type="match status" value="1"/>
</dbReference>
<dbReference type="PROSITE" id="PS52019">
    <property type="entry name" value="PKS_MFAS_DH"/>
    <property type="match status" value="1"/>
</dbReference>
<comment type="function">
    <text evidence="5">Reducing polyketide synthase; part of the gene cluster that mediates the biosynthesis of gregatin A, a fungal polyketide featuring an alkylated furanone core (PubMed:32275405). The PKS grgA synthesizes C11 and C4 polyketide chains in the presence and absence of the trans-enoyl reductase grgB, respectively (PubMed:32275405). The polyketide transferase grgF is then responsible for the fusion of the two carbon chains to produce the furanone skeleton of gregatin A (PubMed:32275405). Next, the cytochrome P450 monooxygenase grgG accepts performs the oxidative cyclization to furnish the gregatin scaffold and leads to the formation of desmethylgregatin A (PubMed:32275405). Finally, the O-methyltransferase grgD methylates the carboxyl group of desmethylgregatin A to provide gregatin A (PubMed:32275405).</text>
</comment>
<comment type="cofactor">
    <cofactor evidence="2">
        <name>pantetheine 4'-phosphate</name>
        <dbReference type="ChEBI" id="CHEBI:47942"/>
    </cofactor>
</comment>
<comment type="pathway">
    <text evidence="5">Secondary metabolite biosynthesis.</text>
</comment>
<comment type="domain">
    <text evidence="7">Multidomain protein; including a ketosynthase (KS) that catalyzes repeated decarboxylative condensation to elongate the polyketide backbone; a malonyl-CoA:ACP transacylase (MAT) that selects and transfers the extender unit malonyl-CoA; a dehydratase (DH) domain that reduces hydroxyl groups to enoyl groups; a methyltransferase (MT) domain responsible for the incorporation of methyl groups; a ketoreductase (KR) domain that catalyzes beta-ketoreduction steps; and an acyl-carrier protein (ACP) that serves as the tether of the growing and completed polyketide via its phosphopantetheinyl arm.</text>
</comment>
<reference key="1">
    <citation type="journal article" date="2020" name="J. Am. Chem. Soc.">
        <title>Molecular basis for the biosynthesis of an unusual chain-fused polyketide gregatin A.</title>
        <authorList>
            <person name="Wang W.G."/>
            <person name="Wang H."/>
            <person name="Du L.Q."/>
            <person name="Li M."/>
            <person name="Chen L."/>
            <person name="Yu J."/>
            <person name="Cheng G.G."/>
            <person name="Zhan M.T."/>
            <person name="Hu Q.F."/>
            <person name="Zhang L."/>
            <person name="Yao M."/>
            <person name="Matsuda Y."/>
        </authorList>
    </citation>
    <scope>NUCLEOTIDE SEQUENCE [GENOMIC DNA]</scope>
    <scope>FUNCTION</scope>
    <scope>DOMAIN</scope>
    <scope>CATALYTIC ACTIVITY</scope>
    <scope>PATHWAY</scope>
    <source>
        <strain>Sh18</strain>
    </source>
</reference>
<keyword id="KW-0012">Acyltransferase</keyword>
<keyword id="KW-0489">Methyltransferase</keyword>
<keyword id="KW-0511">Multifunctional enzyme</keyword>
<keyword id="KW-0521">NADP</keyword>
<keyword id="KW-0560">Oxidoreductase</keyword>
<keyword id="KW-0596">Phosphopantetheine</keyword>
<keyword id="KW-0597">Phosphoprotein</keyword>
<keyword id="KW-0949">S-adenosyl-L-methionine</keyword>
<keyword id="KW-0808">Transferase</keyword>
<gene>
    <name evidence="6" type="primary">grgA</name>
</gene>
<protein>
    <recommendedName>
        <fullName evidence="6">Reducing polyketide synthase grgA</fullName>
        <shortName evidence="6">PKS grgA</shortName>
        <ecNumber evidence="5">2.3.1.-</ecNumber>
    </recommendedName>
    <alternativeName>
        <fullName evidence="6">Gregatin A biosynthesis cluster protein A</fullName>
    </alternativeName>
</protein>
<evidence type="ECO:0000255" key="1"/>
<evidence type="ECO:0000255" key="2">
    <source>
        <dbReference type="PROSITE-ProRule" id="PRU00258"/>
    </source>
</evidence>
<evidence type="ECO:0000255" key="3">
    <source>
        <dbReference type="PROSITE-ProRule" id="PRU01348"/>
    </source>
</evidence>
<evidence type="ECO:0000255" key="4">
    <source>
        <dbReference type="PROSITE-ProRule" id="PRU01363"/>
    </source>
</evidence>
<evidence type="ECO:0000269" key="5">
    <source>
    </source>
</evidence>
<evidence type="ECO:0000303" key="6">
    <source>
    </source>
</evidence>
<evidence type="ECO:0000305" key="7">
    <source>
    </source>
</evidence>
<sequence length="2473" mass="270161">MGSIETEGNPPYFAREPIAIVGSSCRFPGGATSPSKLWELLEKPRDVLQEIPATRFNTKAFHHPDSQHHGSTNVKHAYLLDEDPRAFDRDFFSINPKEAEAMDPQQRLLLETVYEGIESTGHSMQQLRGSTTAVFVGCMSFDYHLTAIRGIDSLPQYHGTGTAASILANRVSYFYDWKGPSVTIDTACSSSLVALHQAVSALRNGEAEMAVAAGSNLIIGPEPFVSESKLNMLSPNGRSFMWDAAADGYTRGEGFAAVFLKTLSQAIADGDHIECIIRETGVNSDGKTPGITMPSSESQARLIRDTYARCGLNPARESDRPQYFEAHGTGTQAGDPIEARAIQSVFFPNEREGQLIVGSIKTVIGHTEGTAGIAGVLKASLAVQHGQIPANLHFKDLNPKIRPYYTNLRIPTETTPWPAVSKGYPRRVSVNSFGFGGTNAHAIIESWDGAGSLTNGYALNGNTLKPLGAGPFVLSANSGAALAANAGALADYLRAHPDADLRRLAYTLFRRTDFPFRAAFSATSVEQLAEKLEAGKDSLKSSSRTATIPEVLPPRILGIFTGQGAQWATMGKELYGASSVFRSAIDQMQRALNSLPIEDRPDWSLVDQLDAPAVDSRVGEAIVSQPLCTALQVALVDVLRAAGVELSAVVGHSSGEIGAAYAAGYLDATDAIRVAYYRGFHSHLAQGPGGKRGKMMAVGMSLNQATTFCSEFGGTLTVAASNSQTSCTLAGDAEAIEDAHARLQEKGTFARVLQVDTAYHSHHMKPCAIPYLESMKQCGVTVQKGGKQCRWYSSVWGSDGRSRSFNQADGLLLEGQYWVDNMTQPVLFSQALARALNEDQYFDLALEVGPHPALKGPSAETIKMLTGLSLPYSGVLKRGQNAVTSFSDALGLLWTSFPSSRPLITFDGVRRAFPSREPLKLAVLKGLPAYSWDHPGLIWKESRTSRIFRTQSQPRHELLGHSVTHGERDKREVHWKQLLRLNELPWLAGHRIQGEVLFPASGYLSMAYEAATRLVDDRQPLRLVELHDIDIVRAMRLEQDSSGLEVVFTVRVTAQSDDCITAEVACYSGAVDSVQPLDAPQTGLTAHFTGGVRLWLGEPSTDTLPSRKTPLLPMEALDMEQLYSNLAKEGFNYADLFQAKSMHRRLNRAVVTVSSPSEPSSMRECVHPAPVDTAFQGLLAGFSFPGDGRLGTIYLPTRVECVRVNMMPSESHATVLTADATVTSTGKTTLTGDVDLFDAANARTQVQIRGIHLSAVGQRRDPWLYAGTTWARDVSYGIEPSIKTKLSEADWVLYEQLSRTAYFYLRQLRKKILPQELMLMGKYRKHMMTWVLEHLLPRIEAGEHPEIRAEWKDDTLEMVQQWRASQPSDNNDMNILHAMGKNLVGIVRGTTPPLRVLTQDGMLDRLYVEGLGARDGNHDLAGFVKQLAHQYPRMRIAEVGAGTGGTTRAVLDALGNQYASYTYTDISTGFFENARTLFGQHSSKLSFKTLNIENDPVDQGFPEGTFDMVISSNCLHATRSLGETLRHCRQLLQPGGRLVLLEITRDFLPTQLVMSTLPGWFLGIEDGRVWAPTVSLERWDELLKANGFSGVEISSTPSFCSVIVAQAVDETVQLLREPLAVAPTALPPLGDILIVGGGVTSELASQIQKPLQAAAPSNTVTVLPGLEGIEVPKGAAVLCLSDLDSPVFRDMNSKRFRGLQNVMESAEVVLWVTSGAKSGNDPDANITLGLSSTLRAERMDLRLQFLDVDEPSSVDPSMLASMLLRLAFLDPSKNDELLWVQEPELALKEGALYVPRVVSLDTLNRRSAARHRQVTQLTSVGSEDVAVVVDERQGAFELQTIPFGGATKDEICLQVLASSIRTITCDEYGPVYVCIGRDLVSGDTALALSAVNSSVVKVSEDHILYRWQDDKTTAEYTAHLHLFLVRALAEHLLGSLKGPTWIHGAPHGLREVIDVVAREQSVAVFQTTSDMAMTSDVNFIHPYANKEDLQDFRPKGLQSFINLARQEHRALSAFIHASLPASAIVNKDVASLTASLILPELRILAKQNIHDGLQVPTESVEIVAIDKVSTVTSKELGPAVLIDWSTADTINALVRPLEHRGLFAPDKTYLLCGMTGDLGISVCLWMVENGARNVVLTSRNPNISPSVLNYLSHKGATVRPMAVDITNMDSLRSAYNDIKSSMPPVGGVMNAAMVLRDRLFHHLPWEDFAAVLGPKMVGSKNLDELFGNEQLDFFVCFSSTTSIVGSIGQSAYAAANHYMASLVQQRLQRGLAGSVIHIAILTGFGYIFRRDSEHAETIYKAILPRFDRQSETDLHEMLAEAIVCGRPGSAQPAELITGIRSVFQGEWRDDPRLSCYIGQQQLQDDSSGEQAAGSVSVKDQLASAEDPAECLVILESCFALSLGNLLEIDPEQLDHNMPVANLGIDSLVAIRIREWFLREMGVDMPVLKIMSDTYSMSRMCDDALVEWRRLNKS</sequence>
<name>GRGA_PENSQ</name>
<organism>
    <name type="scientific">Penicillium sp</name>
    <dbReference type="NCBI Taxonomy" id="5081"/>
    <lineage>
        <taxon>Eukaryota</taxon>
        <taxon>Fungi</taxon>
        <taxon>Dikarya</taxon>
        <taxon>Ascomycota</taxon>
        <taxon>Pezizomycotina</taxon>
        <taxon>Eurotiomycetes</taxon>
        <taxon>Eurotiomycetidae</taxon>
        <taxon>Eurotiales</taxon>
        <taxon>Aspergillaceae</taxon>
        <taxon>Penicillium</taxon>
    </lineage>
</organism>